<feature type="chain" id="PRO_0000356775" description="Large ribosomal subunit protein bL33">
    <location>
        <begin position="1"/>
        <end position="55"/>
    </location>
</feature>
<keyword id="KW-0687">Ribonucleoprotein</keyword>
<keyword id="KW-0689">Ribosomal protein</keyword>
<comment type="similarity">
    <text evidence="1">Belongs to the bacterial ribosomal protein bL33 family.</text>
</comment>
<reference key="1">
    <citation type="submission" date="2008-08" db="EMBL/GenBank/DDBJ databases">
        <title>Complete sequence of Vibrio fischeri strain MJ11.</title>
        <authorList>
            <person name="Mandel M.J."/>
            <person name="Stabb E.V."/>
            <person name="Ruby E.G."/>
            <person name="Ferriera S."/>
            <person name="Johnson J."/>
            <person name="Kravitz S."/>
            <person name="Beeson K."/>
            <person name="Sutton G."/>
            <person name="Rogers Y.-H."/>
            <person name="Friedman R."/>
            <person name="Frazier M."/>
            <person name="Venter J.C."/>
        </authorList>
    </citation>
    <scope>NUCLEOTIDE SEQUENCE [LARGE SCALE GENOMIC DNA]</scope>
    <source>
        <strain>MJ11</strain>
    </source>
</reference>
<gene>
    <name evidence="1" type="primary">rpmG</name>
    <name type="ordered locus">VFMJ11_0125</name>
</gene>
<sequence>MAKGAREKIKLVSTANTGHFYTTDKNKRNMPGKMEIKKYDPVVRQHVLYKEAKIK</sequence>
<protein>
    <recommendedName>
        <fullName evidence="1">Large ribosomal subunit protein bL33</fullName>
    </recommendedName>
    <alternativeName>
        <fullName evidence="2">50S ribosomal protein L33</fullName>
    </alternativeName>
</protein>
<name>RL33_ALIFM</name>
<dbReference type="EMBL" id="CP001139">
    <property type="protein sequence ID" value="ACH65099.1"/>
    <property type="molecule type" value="Genomic_DNA"/>
</dbReference>
<dbReference type="RefSeq" id="WP_005417052.1">
    <property type="nucleotide sequence ID" value="NC_011184.1"/>
</dbReference>
<dbReference type="SMR" id="B5FFF8"/>
<dbReference type="GeneID" id="54162754"/>
<dbReference type="KEGG" id="vfm:VFMJ11_0125"/>
<dbReference type="HOGENOM" id="CLU_190949_1_1_6"/>
<dbReference type="Proteomes" id="UP000001857">
    <property type="component" value="Chromosome I"/>
</dbReference>
<dbReference type="GO" id="GO:0022625">
    <property type="term" value="C:cytosolic large ribosomal subunit"/>
    <property type="evidence" value="ECO:0007669"/>
    <property type="project" value="TreeGrafter"/>
</dbReference>
<dbReference type="GO" id="GO:0003735">
    <property type="term" value="F:structural constituent of ribosome"/>
    <property type="evidence" value="ECO:0007669"/>
    <property type="project" value="InterPro"/>
</dbReference>
<dbReference type="GO" id="GO:0006412">
    <property type="term" value="P:translation"/>
    <property type="evidence" value="ECO:0007669"/>
    <property type="project" value="UniProtKB-UniRule"/>
</dbReference>
<dbReference type="FunFam" id="2.20.28.120:FF:000001">
    <property type="entry name" value="50S ribosomal protein L33"/>
    <property type="match status" value="1"/>
</dbReference>
<dbReference type="Gene3D" id="2.20.28.120">
    <property type="entry name" value="Ribosomal protein L33"/>
    <property type="match status" value="1"/>
</dbReference>
<dbReference type="HAMAP" id="MF_00294">
    <property type="entry name" value="Ribosomal_bL33"/>
    <property type="match status" value="1"/>
</dbReference>
<dbReference type="InterPro" id="IPR001705">
    <property type="entry name" value="Ribosomal_bL33"/>
</dbReference>
<dbReference type="InterPro" id="IPR018264">
    <property type="entry name" value="Ribosomal_bL33_CS"/>
</dbReference>
<dbReference type="InterPro" id="IPR038584">
    <property type="entry name" value="Ribosomal_bL33_sf"/>
</dbReference>
<dbReference type="InterPro" id="IPR011332">
    <property type="entry name" value="Ribosomal_zn-bd"/>
</dbReference>
<dbReference type="NCBIfam" id="NF001860">
    <property type="entry name" value="PRK00595.1"/>
    <property type="match status" value="1"/>
</dbReference>
<dbReference type="NCBIfam" id="TIGR01023">
    <property type="entry name" value="rpmG_bact"/>
    <property type="match status" value="1"/>
</dbReference>
<dbReference type="PANTHER" id="PTHR15238">
    <property type="entry name" value="54S RIBOSOMAL PROTEIN L39, MITOCHONDRIAL"/>
    <property type="match status" value="1"/>
</dbReference>
<dbReference type="PANTHER" id="PTHR15238:SF1">
    <property type="entry name" value="LARGE RIBOSOMAL SUBUNIT PROTEIN BL33M"/>
    <property type="match status" value="1"/>
</dbReference>
<dbReference type="Pfam" id="PF00471">
    <property type="entry name" value="Ribosomal_L33"/>
    <property type="match status" value="1"/>
</dbReference>
<dbReference type="SUPFAM" id="SSF57829">
    <property type="entry name" value="Zn-binding ribosomal proteins"/>
    <property type="match status" value="1"/>
</dbReference>
<dbReference type="PROSITE" id="PS00582">
    <property type="entry name" value="RIBOSOMAL_L33"/>
    <property type="match status" value="1"/>
</dbReference>
<proteinExistence type="inferred from homology"/>
<organism>
    <name type="scientific">Aliivibrio fischeri (strain MJ11)</name>
    <name type="common">Vibrio fischeri</name>
    <dbReference type="NCBI Taxonomy" id="388396"/>
    <lineage>
        <taxon>Bacteria</taxon>
        <taxon>Pseudomonadati</taxon>
        <taxon>Pseudomonadota</taxon>
        <taxon>Gammaproteobacteria</taxon>
        <taxon>Vibrionales</taxon>
        <taxon>Vibrionaceae</taxon>
        <taxon>Aliivibrio</taxon>
    </lineage>
</organism>
<accession>B5FFF8</accession>
<evidence type="ECO:0000255" key="1">
    <source>
        <dbReference type="HAMAP-Rule" id="MF_00294"/>
    </source>
</evidence>
<evidence type="ECO:0000305" key="2"/>